<organism>
    <name type="scientific">Elusimicrobium minutum (strain Pei191)</name>
    <dbReference type="NCBI Taxonomy" id="445932"/>
    <lineage>
        <taxon>Bacteria</taxon>
        <taxon>Pseudomonadati</taxon>
        <taxon>Elusimicrobiota</taxon>
        <taxon>Elusimicrobia</taxon>
        <taxon>Elusimicrobiales</taxon>
        <taxon>Elusimicrobiaceae</taxon>
        <taxon>Elusimicrobium</taxon>
    </lineage>
</organism>
<accession>B2KE25</accession>
<sequence>MNIVLAASEAFPFCKTGGLADVTGSLAKELSKHKGNRVILFLPHYRNINRVASLKVVPGTFLIPIGDRLETASLSYISWGNVLVFFINNTKYFDRPELYRTAAGDYFDNDERFIFFNRAVLESCKFIGYRPDIIHAHDWQAGLLPAYLKTVYKTDAFFTRTRSLFTIHNMAYQGQYPYSTFIKTGFHTVDYVPERFEYYGGISYLKSGIVYADYVNTVSPNYAKEITLDEKMGFGMEGLLRSRQDTFCGILNGLDTGVWDPEHDPLIPYSYESFSPVKGKAACKQFLQNMLGLEVSPSKPLVGIVSRMDYQKGLDLIPGVVNKYKDKVQFVVVGTGDSGMEKAFMALAKNNVGKVAYVAKVDEELAHRVYAGSDIFLMPSRFEPCGLSQMISMRYGTVPIVSRVGGLLDTVKGYDGITKYATGFFILEFSETGIERSLDYALKYYQDKRCWGMLIKNGMEKDFSWTKSAQEYQDLYKKIISK</sequence>
<keyword id="KW-0320">Glycogen biosynthesis</keyword>
<keyword id="KW-0328">Glycosyltransferase</keyword>
<keyword id="KW-1185">Reference proteome</keyword>
<keyword id="KW-0808">Transferase</keyword>
<reference key="1">
    <citation type="journal article" date="2009" name="Appl. Environ. Microbiol.">
        <title>Genomic analysis of 'Elusimicrobium minutum,' the first cultivated representative of the phylum 'Elusimicrobia' (formerly termite group 1).</title>
        <authorList>
            <person name="Herlemann D.P.R."/>
            <person name="Geissinger O."/>
            <person name="Ikeda-Ohtsubo W."/>
            <person name="Kunin V."/>
            <person name="Sun H."/>
            <person name="Lapidus A."/>
            <person name="Hugenholtz P."/>
            <person name="Brune A."/>
        </authorList>
    </citation>
    <scope>NUCLEOTIDE SEQUENCE [LARGE SCALE GENOMIC DNA]</scope>
    <source>
        <strain>Pei191</strain>
    </source>
</reference>
<evidence type="ECO:0000255" key="1">
    <source>
        <dbReference type="HAMAP-Rule" id="MF_00484"/>
    </source>
</evidence>
<proteinExistence type="inferred from homology"/>
<comment type="function">
    <text evidence="1">Synthesizes alpha-1,4-glucan chains using ADP-glucose.</text>
</comment>
<comment type="catalytic activity">
    <reaction evidence="1">
        <text>[(1-&gt;4)-alpha-D-glucosyl](n) + ADP-alpha-D-glucose = [(1-&gt;4)-alpha-D-glucosyl](n+1) + ADP + H(+)</text>
        <dbReference type="Rhea" id="RHEA:18189"/>
        <dbReference type="Rhea" id="RHEA-COMP:9584"/>
        <dbReference type="Rhea" id="RHEA-COMP:9587"/>
        <dbReference type="ChEBI" id="CHEBI:15378"/>
        <dbReference type="ChEBI" id="CHEBI:15444"/>
        <dbReference type="ChEBI" id="CHEBI:57498"/>
        <dbReference type="ChEBI" id="CHEBI:456216"/>
        <dbReference type="EC" id="2.4.1.21"/>
    </reaction>
</comment>
<comment type="pathway">
    <text evidence="1">Glycan biosynthesis; glycogen biosynthesis.</text>
</comment>
<comment type="similarity">
    <text evidence="1">Belongs to the glycosyltransferase 1 family. Bacterial/plant glycogen synthase subfamily.</text>
</comment>
<gene>
    <name evidence="1" type="primary">glgA</name>
    <name type="ordered locus">Emin_1221</name>
</gene>
<name>GLGA_ELUMP</name>
<dbReference type="EC" id="2.4.1.21" evidence="1"/>
<dbReference type="EMBL" id="CP001055">
    <property type="protein sequence ID" value="ACC98771.1"/>
    <property type="molecule type" value="Genomic_DNA"/>
</dbReference>
<dbReference type="RefSeq" id="WP_012415386.1">
    <property type="nucleotide sequence ID" value="NC_010644.1"/>
</dbReference>
<dbReference type="SMR" id="B2KE25"/>
<dbReference type="STRING" id="445932.Emin_1221"/>
<dbReference type="CAZy" id="GT5">
    <property type="family name" value="Glycosyltransferase Family 5"/>
</dbReference>
<dbReference type="KEGG" id="emi:Emin_1221"/>
<dbReference type="HOGENOM" id="CLU_009583_18_2_0"/>
<dbReference type="OrthoDB" id="9808590at2"/>
<dbReference type="UniPathway" id="UPA00164"/>
<dbReference type="Proteomes" id="UP000001029">
    <property type="component" value="Chromosome"/>
</dbReference>
<dbReference type="GO" id="GO:0009011">
    <property type="term" value="F:alpha-1,4-glucan glucosyltransferase (ADP-glucose donor) activity"/>
    <property type="evidence" value="ECO:0007669"/>
    <property type="project" value="UniProtKB-UniRule"/>
</dbReference>
<dbReference type="GO" id="GO:0004373">
    <property type="term" value="F:alpha-1,4-glucan glucosyltransferase (UDP-glucose donor) activity"/>
    <property type="evidence" value="ECO:0007669"/>
    <property type="project" value="InterPro"/>
</dbReference>
<dbReference type="GO" id="GO:0005978">
    <property type="term" value="P:glycogen biosynthetic process"/>
    <property type="evidence" value="ECO:0007669"/>
    <property type="project" value="UniProtKB-UniRule"/>
</dbReference>
<dbReference type="CDD" id="cd03791">
    <property type="entry name" value="GT5_Glycogen_synthase_DULL1-like"/>
    <property type="match status" value="1"/>
</dbReference>
<dbReference type="Gene3D" id="3.40.50.2000">
    <property type="entry name" value="Glycogen Phosphorylase B"/>
    <property type="match status" value="2"/>
</dbReference>
<dbReference type="HAMAP" id="MF_00484">
    <property type="entry name" value="Glycogen_synth"/>
    <property type="match status" value="1"/>
</dbReference>
<dbReference type="InterPro" id="IPR001296">
    <property type="entry name" value="Glyco_trans_1"/>
</dbReference>
<dbReference type="InterPro" id="IPR011835">
    <property type="entry name" value="GS/SS"/>
</dbReference>
<dbReference type="InterPro" id="IPR013534">
    <property type="entry name" value="Starch_synth_cat_dom"/>
</dbReference>
<dbReference type="NCBIfam" id="TIGR02095">
    <property type="entry name" value="glgA"/>
    <property type="match status" value="1"/>
</dbReference>
<dbReference type="PANTHER" id="PTHR45825:SF11">
    <property type="entry name" value="ALPHA AMYLASE DOMAIN-CONTAINING PROTEIN"/>
    <property type="match status" value="1"/>
</dbReference>
<dbReference type="PANTHER" id="PTHR45825">
    <property type="entry name" value="GRANULE-BOUND STARCH SYNTHASE 1, CHLOROPLASTIC/AMYLOPLASTIC"/>
    <property type="match status" value="1"/>
</dbReference>
<dbReference type="Pfam" id="PF08323">
    <property type="entry name" value="Glyco_transf_5"/>
    <property type="match status" value="1"/>
</dbReference>
<dbReference type="Pfam" id="PF00534">
    <property type="entry name" value="Glycos_transf_1"/>
    <property type="match status" value="1"/>
</dbReference>
<dbReference type="SUPFAM" id="SSF53756">
    <property type="entry name" value="UDP-Glycosyltransferase/glycogen phosphorylase"/>
    <property type="match status" value="1"/>
</dbReference>
<protein>
    <recommendedName>
        <fullName evidence="1">Glycogen synthase</fullName>
        <ecNumber evidence="1">2.4.1.21</ecNumber>
    </recommendedName>
    <alternativeName>
        <fullName evidence="1">Starch [bacterial glycogen] synthase</fullName>
    </alternativeName>
</protein>
<feature type="chain" id="PRO_1000126073" description="Glycogen synthase">
    <location>
        <begin position="1"/>
        <end position="482"/>
    </location>
</feature>
<feature type="binding site" evidence="1">
    <location>
        <position position="15"/>
    </location>
    <ligand>
        <name>ADP-alpha-D-glucose</name>
        <dbReference type="ChEBI" id="CHEBI:57498"/>
    </ligand>
</feature>